<sequence length="478" mass="54035">MSSYSESPKLPVREIPGDYGFPIISAIKDRYDYFYNQGEDAWFHGKAEKYKSTVVKINMAPGPFTSNDYKLVAFLDATSFVYMFDNTLIDKTDTLGGTFKPGKEYYGGYRPVAFVDTKDPNHAALKGYILSSFAKRHNLFIPLFRNSLSDHLFNDLEKQVSEQGKSDFNALLPNMTFGFIFRLLCDQTNPSDTVLGAQGPEHLRKWLFPQLIPSLSARKLPSFIEDLLFHNFLIPFGFVKSDYQKLVDAFSKSAVSMLDEAEKLGIKREEAVHNMLFLVGINMFAGLNAFFPHLIRFVGEAGPNLHTRLANEIRTAIKEEGGAITLSAINKMSLVKSVVYETLRLRPPVPLQYGKAKKDFMVQSHDASYKINKGQFLVGYNPMASRDPKIFANPDEFVPDRFMGDGEKMLKHVLWSNGRETENPAPENKQCAGKDLVQLLGRLILVEFFMRYDTFTVEITPLFRAPNVAIKTLTKATS</sequence>
<comment type="function">
    <text evidence="1">Involved in the biosynthesis of the anti-fungal toxins colneleic acid and colnelenic acid.</text>
</comment>
<comment type="catalytic activity">
    <reaction>
        <text>(9S)-hydroperoxy-(10E,12Z)-octadecadienoate = colneleate + H2O</text>
        <dbReference type="Rhea" id="RHEA:28174"/>
        <dbReference type="ChEBI" id="CHEBI:15377"/>
        <dbReference type="ChEBI" id="CHEBI:60955"/>
        <dbReference type="ChEBI" id="CHEBI:60957"/>
        <dbReference type="EC" id="4.2.1.121"/>
    </reaction>
</comment>
<comment type="similarity">
    <text evidence="2">Belongs to the cytochrome P450 family. 9-divinyl ether synthase subfamily.</text>
</comment>
<evidence type="ECO:0000250" key="1"/>
<evidence type="ECO:0000305" key="2"/>
<dbReference type="EC" id="4.2.1.121"/>
<dbReference type="EMBL" id="DQ832721">
    <property type="protein sequence ID" value="ABH03632.1"/>
    <property type="molecule type" value="mRNA"/>
</dbReference>
<dbReference type="RefSeq" id="NP_001311513.1">
    <property type="nucleotide sequence ID" value="NM_001324584.1"/>
</dbReference>
<dbReference type="SMR" id="Q0PHS9"/>
<dbReference type="GeneID" id="107840369"/>
<dbReference type="KEGG" id="cann:107840369"/>
<dbReference type="OrthoDB" id="2789670at2759"/>
<dbReference type="GO" id="GO:0102895">
    <property type="term" value="F:colneleate synthase activity"/>
    <property type="evidence" value="ECO:0007669"/>
    <property type="project" value="UniProtKB-EC"/>
</dbReference>
<dbReference type="GO" id="GO:0020037">
    <property type="term" value="F:heme binding"/>
    <property type="evidence" value="ECO:0007669"/>
    <property type="project" value="InterPro"/>
</dbReference>
<dbReference type="GO" id="GO:0005506">
    <property type="term" value="F:iron ion binding"/>
    <property type="evidence" value="ECO:0007669"/>
    <property type="project" value="InterPro"/>
</dbReference>
<dbReference type="GO" id="GO:0004497">
    <property type="term" value="F:monooxygenase activity"/>
    <property type="evidence" value="ECO:0007669"/>
    <property type="project" value="InterPro"/>
</dbReference>
<dbReference type="GO" id="GO:0016705">
    <property type="term" value="F:oxidoreductase activity, acting on paired donors, with incorporation or reduction of molecular oxygen"/>
    <property type="evidence" value="ECO:0007669"/>
    <property type="project" value="InterPro"/>
</dbReference>
<dbReference type="CDD" id="cd11071">
    <property type="entry name" value="CYP74"/>
    <property type="match status" value="1"/>
</dbReference>
<dbReference type="FunFam" id="1.10.630.10:FF:000024">
    <property type="entry name" value="Allene oxide synthase, chloroplastic"/>
    <property type="match status" value="1"/>
</dbReference>
<dbReference type="Gene3D" id="1.10.630.10">
    <property type="entry name" value="Cytochrome P450"/>
    <property type="match status" value="1"/>
</dbReference>
<dbReference type="InterPro" id="IPR001128">
    <property type="entry name" value="Cyt_P450"/>
</dbReference>
<dbReference type="InterPro" id="IPR002403">
    <property type="entry name" value="Cyt_P450_E_grp-IV"/>
</dbReference>
<dbReference type="InterPro" id="IPR036396">
    <property type="entry name" value="Cyt_P450_sf"/>
</dbReference>
<dbReference type="PANTHER" id="PTHR24286:SF253">
    <property type="entry name" value="9-DIVINYL ETHER SYNTHASE"/>
    <property type="match status" value="1"/>
</dbReference>
<dbReference type="PANTHER" id="PTHR24286">
    <property type="entry name" value="CYTOCHROME P450 26"/>
    <property type="match status" value="1"/>
</dbReference>
<dbReference type="Pfam" id="PF00067">
    <property type="entry name" value="p450"/>
    <property type="match status" value="1"/>
</dbReference>
<dbReference type="PRINTS" id="PR00465">
    <property type="entry name" value="EP450IV"/>
</dbReference>
<dbReference type="SUPFAM" id="SSF48264">
    <property type="entry name" value="Cytochrome P450"/>
    <property type="match status" value="1"/>
</dbReference>
<gene>
    <name type="primary">DES</name>
    <name type="synonym">CYP74D4</name>
</gene>
<name>DES_CAPAN</name>
<reference key="1">
    <citation type="submission" date="2006-06" db="EMBL/GenBank/DDBJ databases">
        <title>Induction of divinyl ether synthase gene transcription in pepper leaves inoculated with Tobamoviruses.</title>
        <authorList>
            <person name="Gullner G."/>
            <person name="Kunstler A."/>
            <person name="Kiraly L."/>
            <person name="Pogany M."/>
            <person name="Tobias I."/>
        </authorList>
    </citation>
    <scope>NUCLEOTIDE SEQUENCE [MRNA]</scope>
    <source>
        <tissue>Leaf</tissue>
    </source>
</reference>
<reference key="2">
    <citation type="journal article" date="2008" name="Trop. Plant Biol.">
        <title>Comparison of cytochrome P450 genes from six plant genomes.</title>
        <authorList>
            <person name="Nelson D.R."/>
            <person name="Ming R."/>
            <person name="Alam M."/>
            <person name="Schuler M.A."/>
        </authorList>
    </citation>
    <scope>NOMENCLATURE</scope>
</reference>
<proteinExistence type="evidence at transcript level"/>
<accession>Q0PHS9</accession>
<keyword id="KW-0349">Heme</keyword>
<keyword id="KW-0408">Iron</keyword>
<keyword id="KW-0456">Lyase</keyword>
<keyword id="KW-0479">Metal-binding</keyword>
<organism>
    <name type="scientific">Capsicum annuum</name>
    <name type="common">Capsicum pepper</name>
    <dbReference type="NCBI Taxonomy" id="4072"/>
    <lineage>
        <taxon>Eukaryota</taxon>
        <taxon>Viridiplantae</taxon>
        <taxon>Streptophyta</taxon>
        <taxon>Embryophyta</taxon>
        <taxon>Tracheophyta</taxon>
        <taxon>Spermatophyta</taxon>
        <taxon>Magnoliopsida</taxon>
        <taxon>eudicotyledons</taxon>
        <taxon>Gunneridae</taxon>
        <taxon>Pentapetalae</taxon>
        <taxon>asterids</taxon>
        <taxon>lamiids</taxon>
        <taxon>Solanales</taxon>
        <taxon>Solanaceae</taxon>
        <taxon>Solanoideae</taxon>
        <taxon>Capsiceae</taxon>
        <taxon>Capsicum</taxon>
    </lineage>
</organism>
<protein>
    <recommendedName>
        <fullName>9-divinyl ether synthase</fullName>
        <shortName>StDES</shortName>
        <ecNumber>4.2.1.121</ecNumber>
    </recommendedName>
    <alternativeName>
        <fullName>Colneleate synthase</fullName>
    </alternativeName>
    <alternativeName>
        <fullName>Cytochrome P450 74D4</fullName>
    </alternativeName>
</protein>
<feature type="chain" id="PRO_0000415392" description="9-divinyl ether synthase">
    <location>
        <begin position="1"/>
        <end position="478"/>
    </location>
</feature>
<feature type="binding site" description="axial binding residue" evidence="1">
    <location>
        <position position="431"/>
    </location>
    <ligand>
        <name>heme</name>
        <dbReference type="ChEBI" id="CHEBI:30413"/>
    </ligand>
    <ligandPart>
        <name>Fe</name>
        <dbReference type="ChEBI" id="CHEBI:18248"/>
    </ligandPart>
</feature>